<gene>
    <name type="primary">HOXB5</name>
    <name type="synonym">HOX2A</name>
</gene>
<keyword id="KW-0217">Developmental protein</keyword>
<keyword id="KW-0238">DNA-binding</keyword>
<keyword id="KW-0371">Homeobox</keyword>
<keyword id="KW-0539">Nucleus</keyword>
<keyword id="KW-1267">Proteomics identification</keyword>
<keyword id="KW-1185">Reference proteome</keyword>
<keyword id="KW-0804">Transcription</keyword>
<keyword id="KW-0805">Transcription regulation</keyword>
<protein>
    <recommendedName>
        <fullName>Homeobox protein Hox-B5</fullName>
    </recommendedName>
    <alternativeName>
        <fullName>Homeobox protein HHO.C10</fullName>
    </alternativeName>
    <alternativeName>
        <fullName>Homeobox protein Hox-2A</fullName>
    </alternativeName>
    <alternativeName>
        <fullName>Homeobox protein Hu-1</fullName>
    </alternativeName>
</protein>
<name>HXB5_HUMAN</name>
<comment type="function">
    <text>Sequence-specific transcription factor which is part of a developmental regulatory system that provides cells with specific positional identities on the anterior-posterior axis.</text>
</comment>
<comment type="interaction">
    <interactant intactId="EBI-3893317">
        <id>P09067</id>
    </interactant>
    <interactant intactId="EBI-6425205">
        <id>Q9NWX5</id>
        <label>ASB6</label>
    </interactant>
    <organismsDiffer>false</organismsDiffer>
    <experiments>3</experiments>
</comment>
<comment type="interaction">
    <interactant intactId="EBI-3893317">
        <id>P09067</id>
    </interactant>
    <interactant intactId="EBI-4400025">
        <id>Q9Y2T1</id>
        <label>AXIN2</label>
    </interactant>
    <organismsDiffer>false</organismsDiffer>
    <experiments>3</experiments>
</comment>
<comment type="interaction">
    <interactant intactId="EBI-3893317">
        <id>P09067</id>
    </interactant>
    <interactant intactId="EBI-10179719">
        <id>A2RRN7</id>
        <label>CADPS</label>
    </interactant>
    <organismsDiffer>false</organismsDiffer>
    <experiments>3</experiments>
</comment>
<comment type="interaction">
    <interactant intactId="EBI-3893317">
        <id>P09067</id>
    </interactant>
    <interactant intactId="EBI-739580">
        <id>Q13137</id>
        <label>CALCOCO2</label>
    </interactant>
    <organismsDiffer>false</organismsDiffer>
    <experiments>3</experiments>
</comment>
<comment type="interaction">
    <interactant intactId="EBI-3893317">
        <id>P09067</id>
    </interactant>
    <interactant intactId="EBI-11530605">
        <id>Q9H257-2</id>
        <label>CARD9</label>
    </interactant>
    <organismsDiffer>false</organismsDiffer>
    <experiments>3</experiments>
</comment>
<comment type="interaction">
    <interactant intactId="EBI-3893317">
        <id>P09067</id>
    </interactant>
    <interactant intactId="EBI-347573">
        <id>A6NC98</id>
        <label>CCDC88B</label>
    </interactant>
    <organismsDiffer>false</organismsDiffer>
    <experiments>3</experiments>
</comment>
<comment type="interaction">
    <interactant intactId="EBI-3893317">
        <id>P09067</id>
    </interactant>
    <interactant intactId="EBI-739624">
        <id>Q8NHQ1</id>
        <label>CEP70</label>
    </interactant>
    <organismsDiffer>false</organismsDiffer>
    <experiments>3</experiments>
</comment>
<comment type="interaction">
    <interactant intactId="EBI-3893317">
        <id>P09067</id>
    </interactant>
    <interactant intactId="EBI-12819063">
        <id>Q9BYD5</id>
        <label>CNFN</label>
    </interactant>
    <organismsDiffer>false</organismsDiffer>
    <experiments>3</experiments>
</comment>
<comment type="interaction">
    <interactant intactId="EBI-3893317">
        <id>P09067</id>
    </interactant>
    <interactant intactId="EBI-348169">
        <id>P67870</id>
        <label>CSNK2B</label>
    </interactant>
    <organismsDiffer>false</organismsDiffer>
    <experiments>3</experiments>
</comment>
<comment type="interaction">
    <interactant intactId="EBI-3893317">
        <id>P09067</id>
    </interactant>
    <interactant intactId="EBI-10171858">
        <id>Q13363-2</id>
        <label>CTBP1</label>
    </interactant>
    <organismsDiffer>false</organismsDiffer>
    <experiments>3</experiments>
</comment>
<comment type="interaction">
    <interactant intactId="EBI-3893317">
        <id>P09067</id>
    </interactant>
    <interactant intactId="EBI-10171902">
        <id>P56545-3</id>
        <label>CTBP2</label>
    </interactant>
    <organismsDiffer>false</organismsDiffer>
    <experiments>8</experiments>
</comment>
<comment type="interaction">
    <interactant intactId="EBI-3893317">
        <id>P09067</id>
    </interactant>
    <interactant intactId="EBI-3867333">
        <id>A8MQ03</id>
        <label>CYSRT1</label>
    </interactant>
    <organismsDiffer>false</organismsDiffer>
    <experiments>3</experiments>
</comment>
<comment type="interaction">
    <interactant intactId="EBI-3893317">
        <id>P09067</id>
    </interactant>
    <interactant intactId="EBI-618309">
        <id>Q08379</id>
        <label>GOLGA2</label>
    </interactant>
    <organismsDiffer>false</organismsDiffer>
    <experiments>3</experiments>
</comment>
<comment type="interaction">
    <interactant intactId="EBI-3893317">
        <id>P09067</id>
    </interactant>
    <interactant intactId="EBI-11163335">
        <id>Q9NYA3</id>
        <label>GOLGA6A</label>
    </interactant>
    <organismsDiffer>false</organismsDiffer>
    <experiments>3</experiments>
</comment>
<comment type="interaction">
    <interactant intactId="EBI-3893317">
        <id>P09067</id>
    </interactant>
    <interactant intactId="EBI-5916454">
        <id>A6NEM1</id>
        <label>GOLGA6L9</label>
    </interactant>
    <organismsDiffer>false</organismsDiffer>
    <experiments>3</experiments>
</comment>
<comment type="interaction">
    <interactant intactId="EBI-3893317">
        <id>P09067</id>
    </interactant>
    <interactant intactId="EBI-712814">
        <id>P54257</id>
        <label>HAP1</label>
    </interactant>
    <organismsDiffer>false</organismsDiffer>
    <experiments>3</experiments>
</comment>
<comment type="interaction">
    <interactant intactId="EBI-3893317">
        <id>P09067</id>
    </interactant>
    <interactant intactId="EBI-748420">
        <id>Q9NSC5</id>
        <label>HOMER3</label>
    </interactant>
    <organismsDiffer>false</organismsDiffer>
    <experiments>3</experiments>
</comment>
<comment type="interaction">
    <interactant intactId="EBI-3893317">
        <id>P09067</id>
    </interactant>
    <interactant intactId="EBI-10961706">
        <id>Q96ED9-2</id>
        <label>HOOK2</label>
    </interactant>
    <organismsDiffer>false</organismsDiffer>
    <experiments>3</experiments>
</comment>
<comment type="interaction">
    <interactant intactId="EBI-3893317">
        <id>P09067</id>
    </interactant>
    <interactant intactId="EBI-7116203">
        <id>O75031</id>
        <label>HSF2BP</label>
    </interactant>
    <organismsDiffer>false</organismsDiffer>
    <experiments>3</experiments>
</comment>
<comment type="interaction">
    <interactant intactId="EBI-3893317">
        <id>P09067</id>
    </interactant>
    <interactant intactId="EBI-954040">
        <id>Q92845</id>
        <label>KIFAP3</label>
    </interactant>
    <organismsDiffer>false</organismsDiffer>
    <experiments>3</experiments>
</comment>
<comment type="interaction">
    <interactant intactId="EBI-3893317">
        <id>P09067</id>
    </interactant>
    <interactant intactId="EBI-948001">
        <id>Q15323</id>
        <label>KRT31</label>
    </interactant>
    <organismsDiffer>false</organismsDiffer>
    <experiments>3</experiments>
</comment>
<comment type="interaction">
    <interactant intactId="EBI-3893317">
        <id>P09067</id>
    </interactant>
    <interactant intactId="EBI-1047093">
        <id>O76011</id>
        <label>KRT34</label>
    </interactant>
    <organismsDiffer>false</organismsDiffer>
    <experiments>3</experiments>
</comment>
<comment type="interaction">
    <interactant intactId="EBI-3893317">
        <id>P09067</id>
    </interactant>
    <interactant intactId="EBI-11959885">
        <id>Q07627</id>
        <label>KRTAP1-1</label>
    </interactant>
    <organismsDiffer>false</organismsDiffer>
    <experiments>3</experiments>
</comment>
<comment type="interaction">
    <interactant intactId="EBI-3893317">
        <id>P09067</id>
    </interactant>
    <interactant intactId="EBI-12012928">
        <id>P60371</id>
        <label>KRTAP10-6</label>
    </interactant>
    <organismsDiffer>false</organismsDiffer>
    <experiments>3</experiments>
</comment>
<comment type="interaction">
    <interactant intactId="EBI-3893317">
        <id>P09067</id>
    </interactant>
    <interactant intactId="EBI-10171774">
        <id>P60410</id>
        <label>KRTAP10-8</label>
    </interactant>
    <organismsDiffer>false</organismsDiffer>
    <experiments>3</experiments>
</comment>
<comment type="interaction">
    <interactant intactId="EBI-3893317">
        <id>P09067</id>
    </interactant>
    <interactant intactId="EBI-22311199">
        <id>Q3LI67</id>
        <label>KRTAP6-3</label>
    </interactant>
    <organismsDiffer>false</organismsDiffer>
    <experiments>3</experiments>
</comment>
<comment type="interaction">
    <interactant intactId="EBI-3893317">
        <id>P09067</id>
    </interactant>
    <interactant intactId="EBI-740738">
        <id>O95751</id>
        <label>LDOC1</label>
    </interactant>
    <organismsDiffer>false</organismsDiffer>
    <experiments>3</experiments>
</comment>
<comment type="interaction">
    <interactant intactId="EBI-3893317">
        <id>P09067</id>
    </interactant>
    <interactant intactId="EBI-739552">
        <id>P43364</id>
        <label>MAGEA11</label>
    </interactant>
    <organismsDiffer>false</organismsDiffer>
    <experiments>3</experiments>
</comment>
<comment type="interaction">
    <interactant intactId="EBI-3893317">
        <id>P09067</id>
    </interactant>
    <interactant intactId="EBI-10178634">
        <id>P43364-2</id>
        <label>MAGEA11</label>
    </interactant>
    <organismsDiffer>false</organismsDiffer>
    <experiments>3</experiments>
</comment>
<comment type="interaction">
    <interactant intactId="EBI-3893317">
        <id>P09067</id>
    </interactant>
    <interactant intactId="EBI-16439278">
        <id>Q6FHY5</id>
        <label>MEOX2</label>
    </interactant>
    <organismsDiffer>false</organismsDiffer>
    <experiments>3</experiments>
</comment>
<comment type="interaction">
    <interactant intactId="EBI-3893317">
        <id>P09067</id>
    </interactant>
    <interactant intactId="EBI-10172526">
        <id>Q9UJV3-2</id>
        <label>MID2</label>
    </interactant>
    <organismsDiffer>false</organismsDiffer>
    <experiments>3</experiments>
</comment>
<comment type="interaction">
    <interactant intactId="EBI-3893317">
        <id>P09067</id>
    </interactant>
    <interactant intactId="EBI-11522433">
        <id>Q5JR59-3</id>
        <label>MTUS2</label>
    </interactant>
    <organismsDiffer>false</organismsDiffer>
    <experiments>3</experiments>
</comment>
<comment type="interaction">
    <interactant intactId="EBI-3893317">
        <id>P09067</id>
    </interactant>
    <interactant intactId="EBI-10271199">
        <id>Q8NI38</id>
        <label>NFKBID</label>
    </interactant>
    <organismsDiffer>false</organismsDiffer>
    <experiments>3</experiments>
</comment>
<comment type="interaction">
    <interactant intactId="EBI-3893317">
        <id>P09067</id>
    </interactant>
    <interactant intactId="EBI-536879">
        <id>O43482</id>
        <label>OIP5</label>
    </interactant>
    <organismsDiffer>false</organismsDiffer>
    <experiments>3</experiments>
</comment>
<comment type="interaction">
    <interactant intactId="EBI-3893317">
        <id>P09067</id>
    </interactant>
    <interactant intactId="EBI-301611">
        <id>P40424</id>
        <label>PBX1</label>
    </interactant>
    <organismsDiffer>false</organismsDiffer>
    <experiments>3</experiments>
</comment>
<comment type="interaction">
    <interactant intactId="EBI-3893317">
        <id>P09067</id>
    </interactant>
    <interactant intactId="EBI-348489">
        <id>P40425</id>
        <label>PBX2</label>
    </interactant>
    <organismsDiffer>false</organismsDiffer>
    <experiments>3</experiments>
</comment>
<comment type="interaction">
    <interactant intactId="EBI-3893317">
        <id>P09067</id>
    </interactant>
    <interactant intactId="EBI-10302990">
        <id>Q9BYU1</id>
        <label>PBX4</label>
    </interactant>
    <organismsDiffer>false</organismsDiffer>
    <experiments>3</experiments>
</comment>
<comment type="interaction">
    <interactant intactId="EBI-3893317">
        <id>P09067</id>
    </interactant>
    <interactant intactId="EBI-9640281">
        <id>Q5VU43-2</id>
        <label>PDE4DIP</label>
    </interactant>
    <organismsDiffer>false</organismsDiffer>
    <experiments>3</experiments>
</comment>
<comment type="interaction">
    <interactant intactId="EBI-3893317">
        <id>P09067</id>
    </interactant>
    <interactant intactId="EBI-2339674">
        <id>Q5T6S3</id>
        <label>PHF19</label>
    </interactant>
    <organismsDiffer>false</organismsDiffer>
    <experiments>3</experiments>
</comment>
<comment type="interaction">
    <interactant intactId="EBI-3893317">
        <id>P09067</id>
    </interactant>
    <interactant intactId="EBI-310731">
        <id>Q9Y4D7</id>
        <label>PLXND1</label>
    </interactant>
    <organismsDiffer>false</organismsDiffer>
    <experiments>3</experiments>
</comment>
<comment type="interaction">
    <interactant intactId="EBI-3893317">
        <id>P09067</id>
    </interactant>
    <interactant intactId="EBI-3957793">
        <id>Q9GZV8</id>
        <label>PRDM14</label>
    </interactant>
    <organismsDiffer>false</organismsDiffer>
    <experiments>3</experiments>
</comment>
<comment type="interaction">
    <interactant intactId="EBI-3893317">
        <id>P09067</id>
    </interactant>
    <interactant intactId="EBI-1802965">
        <id>Q96EB6</id>
        <label>SIRT1</label>
    </interactant>
    <organismsDiffer>false</organismsDiffer>
    <experiments>3</experiments>
</comment>
<comment type="interaction">
    <interactant intactId="EBI-3893317">
        <id>P09067</id>
    </interactant>
    <interactant intactId="EBI-750487">
        <id>Q8WW24</id>
        <label>TEKT4</label>
    </interactant>
    <organismsDiffer>false</organismsDiffer>
    <experiments>3</experiments>
</comment>
<comment type="interaction">
    <interactant intactId="EBI-3893317">
        <id>P09067</id>
    </interactant>
    <interactant intactId="EBI-11523345">
        <id>Q8IYF3-3</id>
        <label>TEX11</label>
    </interactant>
    <organismsDiffer>false</organismsDiffer>
    <experiments>3</experiments>
</comment>
<comment type="interaction">
    <interactant intactId="EBI-3893317">
        <id>P09067</id>
    </interactant>
    <interactant intactId="EBI-11741437">
        <id>Q08117-2</id>
        <label>TLE5</label>
    </interactant>
    <organismsDiffer>false</organismsDiffer>
    <experiments>5</experiments>
</comment>
<comment type="interaction">
    <interactant intactId="EBI-3893317">
        <id>P09067</id>
    </interactant>
    <interactant intactId="EBI-359224">
        <id>Q13077</id>
        <label>TRAF1</label>
    </interactant>
    <organismsDiffer>false</organismsDiffer>
    <experiments>3</experiments>
</comment>
<comment type="interaction">
    <interactant intactId="EBI-3893317">
        <id>P09067</id>
    </interactant>
    <interactant intactId="EBI-355744">
        <id>Q12933</id>
        <label>TRAF2</label>
    </interactant>
    <organismsDiffer>false</organismsDiffer>
    <experiments>3</experiments>
</comment>
<comment type="interaction">
    <interactant intactId="EBI-3893317">
        <id>P09067</id>
    </interactant>
    <interactant intactId="EBI-3650647">
        <id>Q9BUZ4</id>
        <label>TRAF4</label>
    </interactant>
    <organismsDiffer>false</organismsDiffer>
    <experiments>3</experiments>
</comment>
<comment type="interaction">
    <interactant intactId="EBI-3893317">
        <id>P09067</id>
    </interactant>
    <interactant intactId="EBI-492476">
        <id>Q96RU7</id>
        <label>TRIB3</label>
    </interactant>
    <organismsDiffer>false</organismsDiffer>
    <experiments>3</experiments>
</comment>
<comment type="interaction">
    <interactant intactId="EBI-3893317">
        <id>P09067</id>
    </interactant>
    <interactant intactId="EBI-740098">
        <id>P36406</id>
        <label>TRIM23</label>
    </interactant>
    <organismsDiffer>false</organismsDiffer>
    <experiments>6</experiments>
</comment>
<comment type="interaction">
    <interactant intactId="EBI-3893317">
        <id>P09067</id>
    </interactant>
    <interactant intactId="EBI-719493">
        <id>P14373</id>
        <label>TRIM27</label>
    </interactant>
    <organismsDiffer>false</organismsDiffer>
    <experiments>3</experiments>
</comment>
<comment type="interaction">
    <interactant intactId="EBI-3893317">
        <id>P09067</id>
    </interactant>
    <interactant intactId="EBI-2130429">
        <id>Q9BYV2</id>
        <label>TRIM54</label>
    </interactant>
    <organismsDiffer>false</organismsDiffer>
    <experiments>3</experiments>
</comment>
<comment type="interaction">
    <interactant intactId="EBI-3893317">
        <id>P09067</id>
    </interactant>
    <interactant intactId="EBI-8601749">
        <id>Q495M9</id>
        <label>USH1G</label>
    </interactant>
    <organismsDiffer>false</organismsDiffer>
    <experiments>3</experiments>
</comment>
<comment type="interaction">
    <interactant intactId="EBI-3893317">
        <id>P09067</id>
    </interactant>
    <interactant intactId="EBI-2799833">
        <id>Q8N1B4</id>
        <label>VPS52</label>
    </interactant>
    <organismsDiffer>false</organismsDiffer>
    <experiments>3</experiments>
</comment>
<comment type="interaction">
    <interactant intactId="EBI-3893317">
        <id>P09067</id>
    </interactant>
    <interactant intactId="EBI-747993">
        <id>Q9NQZ6</id>
        <label>ZC4H2</label>
    </interactant>
    <organismsDiffer>false</organismsDiffer>
    <experiments>3</experiments>
</comment>
<comment type="interaction">
    <interactant intactId="EBI-3893317">
        <id>P09067</id>
    </interactant>
    <interactant intactId="EBI-12030590">
        <id>Q9H0C1</id>
        <label>ZMYND12</label>
    </interactant>
    <organismsDiffer>false</organismsDiffer>
    <experiments>3</experiments>
</comment>
<comment type="interaction">
    <interactant intactId="EBI-3893317">
        <id>P09067</id>
    </interactant>
    <interactant intactId="EBI-10754950">
        <id>Q9HBT8</id>
        <label>ZNF286A</label>
    </interactant>
    <organismsDiffer>false</organismsDiffer>
    <experiments>3</experiments>
</comment>
<comment type="interaction">
    <interactant intactId="EBI-3893317">
        <id>P09067</id>
    </interactant>
    <interactant intactId="EBI-2555731">
        <id>Q9H707</id>
        <label>ZNF552</label>
    </interactant>
    <organismsDiffer>false</organismsDiffer>
    <experiments>3</experiments>
</comment>
<comment type="interaction">
    <interactant intactId="EBI-3893317">
        <id>P09067</id>
    </interactant>
    <interactant intactId="EBI-625509">
        <id>Q8N720</id>
        <label>ZNF655</label>
    </interactant>
    <organismsDiffer>false</organismsDiffer>
    <experiments>3</experiments>
</comment>
<comment type="interaction">
    <interactant intactId="EBI-3893317">
        <id>P09067</id>
    </interactant>
    <interactant intactId="EBI-10251462">
        <id>Q6NX45</id>
        <label>ZNF774</label>
    </interactant>
    <organismsDiffer>false</organismsDiffer>
    <experiments>3</experiments>
</comment>
<comment type="interaction">
    <interactant intactId="EBI-3893317">
        <id>P09067</id>
    </interactant>
    <interactant intactId="EBI-527853">
        <id>Q9UGI0</id>
        <label>ZRANB1</label>
    </interactant>
    <organismsDiffer>false</organismsDiffer>
    <experiments>3</experiments>
</comment>
<comment type="subcellular location">
    <subcellularLocation>
        <location>Nucleus</location>
    </subcellularLocation>
</comment>
<comment type="tissue specificity">
    <text>Spinal cord.</text>
</comment>
<comment type="developmental stage">
    <text>Embryo.</text>
</comment>
<comment type="similarity">
    <text evidence="3">Belongs to the Antp homeobox family.</text>
</comment>
<comment type="sequence caution" evidence="3">
    <conflict type="erroneous initiation">
        <sequence resource="EMBL-CDS" id="AAA52681"/>
    </conflict>
</comment>
<accession>P09067</accession>
<accession>B2RC69</accession>
<accession>P09069</accession>
<accession>Q17RP4</accession>
<sequence length="269" mass="29434">MSSYFVNSFSGRYPNGPDYQLLNYGSGSSLSGSYRDPAAMHTGSYGYNYNGMDLSVNRSSASSSHFGAVGESSRAFPAPAQEPRFRQAASSCSLSSPESLPCTNGDSHGAKPSASSPSDQATSASSSANFTEIDEASASSEPEEAASQLSSPSLARAQPEPMATSTAAPEGQTPQIFPWMRKLHISHDMTGPDGKRARTAYTRYQTLELEKEFHFNRYLTRRRRIEIAHALCLSERQIKIWFQNRRMKWKKDNKLKSMSLATAGSAFQP</sequence>
<proteinExistence type="evidence at protein level"/>
<reference key="1">
    <citation type="journal article" date="1992" name="New Biol.">
        <title>Cooperative DNA binding of the highly conserved human Hox 2.1 homeodomain gene product.</title>
        <authorList>
            <person name="Galang C.K."/>
            <person name="Hauser C.A."/>
        </authorList>
    </citation>
    <scope>NUCLEOTIDE SEQUENCE [MRNA]</scope>
</reference>
<reference key="2">
    <citation type="journal article" date="2000" name="Am. J. Hum. Genet.">
        <title>Overall linkage disequilibrium in 33 populations for highly informative multisite haplotypes spanning the HOXB gene cluster.</title>
        <authorList>
            <person name="Kidd K.K."/>
            <person name="Busygina V."/>
            <person name="DeMille M.M.C."/>
            <person name="Speed W.C."/>
            <person name="Ruggeri V."/>
            <person name="Kidd J.R."/>
            <person name="Pakstis A.J."/>
        </authorList>
    </citation>
    <scope>NUCLEOTIDE SEQUENCE [GENOMIC DNA]</scope>
</reference>
<reference key="3">
    <citation type="journal article" date="2004" name="Nat. Genet.">
        <title>Complete sequencing and characterization of 21,243 full-length human cDNAs.</title>
        <authorList>
            <person name="Ota T."/>
            <person name="Suzuki Y."/>
            <person name="Nishikawa T."/>
            <person name="Otsuki T."/>
            <person name="Sugiyama T."/>
            <person name="Irie R."/>
            <person name="Wakamatsu A."/>
            <person name="Hayashi K."/>
            <person name="Sato H."/>
            <person name="Nagai K."/>
            <person name="Kimura K."/>
            <person name="Makita H."/>
            <person name="Sekine M."/>
            <person name="Obayashi M."/>
            <person name="Nishi T."/>
            <person name="Shibahara T."/>
            <person name="Tanaka T."/>
            <person name="Ishii S."/>
            <person name="Yamamoto J."/>
            <person name="Saito K."/>
            <person name="Kawai Y."/>
            <person name="Isono Y."/>
            <person name="Nakamura Y."/>
            <person name="Nagahari K."/>
            <person name="Murakami K."/>
            <person name="Yasuda T."/>
            <person name="Iwayanagi T."/>
            <person name="Wagatsuma M."/>
            <person name="Shiratori A."/>
            <person name="Sudo H."/>
            <person name="Hosoiri T."/>
            <person name="Kaku Y."/>
            <person name="Kodaira H."/>
            <person name="Kondo H."/>
            <person name="Sugawara M."/>
            <person name="Takahashi M."/>
            <person name="Kanda K."/>
            <person name="Yokoi T."/>
            <person name="Furuya T."/>
            <person name="Kikkawa E."/>
            <person name="Omura Y."/>
            <person name="Abe K."/>
            <person name="Kamihara K."/>
            <person name="Katsuta N."/>
            <person name="Sato K."/>
            <person name="Tanikawa M."/>
            <person name="Yamazaki M."/>
            <person name="Ninomiya K."/>
            <person name="Ishibashi T."/>
            <person name="Yamashita H."/>
            <person name="Murakawa K."/>
            <person name="Fujimori K."/>
            <person name="Tanai H."/>
            <person name="Kimata M."/>
            <person name="Watanabe M."/>
            <person name="Hiraoka S."/>
            <person name="Chiba Y."/>
            <person name="Ishida S."/>
            <person name="Ono Y."/>
            <person name="Takiguchi S."/>
            <person name="Watanabe S."/>
            <person name="Yosida M."/>
            <person name="Hotuta T."/>
            <person name="Kusano J."/>
            <person name="Kanehori K."/>
            <person name="Takahashi-Fujii A."/>
            <person name="Hara H."/>
            <person name="Tanase T.-O."/>
            <person name="Nomura Y."/>
            <person name="Togiya S."/>
            <person name="Komai F."/>
            <person name="Hara R."/>
            <person name="Takeuchi K."/>
            <person name="Arita M."/>
            <person name="Imose N."/>
            <person name="Musashino K."/>
            <person name="Yuuki H."/>
            <person name="Oshima A."/>
            <person name="Sasaki N."/>
            <person name="Aotsuka S."/>
            <person name="Yoshikawa Y."/>
            <person name="Matsunawa H."/>
            <person name="Ichihara T."/>
            <person name="Shiohata N."/>
            <person name="Sano S."/>
            <person name="Moriya S."/>
            <person name="Momiyama H."/>
            <person name="Satoh N."/>
            <person name="Takami S."/>
            <person name="Terashima Y."/>
            <person name="Suzuki O."/>
            <person name="Nakagawa S."/>
            <person name="Senoh A."/>
            <person name="Mizoguchi H."/>
            <person name="Goto Y."/>
            <person name="Shimizu F."/>
            <person name="Wakebe H."/>
            <person name="Hishigaki H."/>
            <person name="Watanabe T."/>
            <person name="Sugiyama A."/>
            <person name="Takemoto M."/>
            <person name="Kawakami B."/>
            <person name="Yamazaki M."/>
            <person name="Watanabe K."/>
            <person name="Kumagai A."/>
            <person name="Itakura S."/>
            <person name="Fukuzumi Y."/>
            <person name="Fujimori Y."/>
            <person name="Komiyama M."/>
            <person name="Tashiro H."/>
            <person name="Tanigami A."/>
            <person name="Fujiwara T."/>
            <person name="Ono T."/>
            <person name="Yamada K."/>
            <person name="Fujii Y."/>
            <person name="Ozaki K."/>
            <person name="Hirao M."/>
            <person name="Ohmori Y."/>
            <person name="Kawabata A."/>
            <person name="Hikiji T."/>
            <person name="Kobatake N."/>
            <person name="Inagaki H."/>
            <person name="Ikema Y."/>
            <person name="Okamoto S."/>
            <person name="Okitani R."/>
            <person name="Kawakami T."/>
            <person name="Noguchi S."/>
            <person name="Itoh T."/>
            <person name="Shigeta K."/>
            <person name="Senba T."/>
            <person name="Matsumura K."/>
            <person name="Nakajima Y."/>
            <person name="Mizuno T."/>
            <person name="Morinaga M."/>
            <person name="Sasaki M."/>
            <person name="Togashi T."/>
            <person name="Oyama M."/>
            <person name="Hata H."/>
            <person name="Watanabe M."/>
            <person name="Komatsu T."/>
            <person name="Mizushima-Sugano J."/>
            <person name="Satoh T."/>
            <person name="Shirai Y."/>
            <person name="Takahashi Y."/>
            <person name="Nakagawa K."/>
            <person name="Okumura K."/>
            <person name="Nagase T."/>
            <person name="Nomura N."/>
            <person name="Kikuchi H."/>
            <person name="Masuho Y."/>
            <person name="Yamashita R."/>
            <person name="Nakai K."/>
            <person name="Yada T."/>
            <person name="Nakamura Y."/>
            <person name="Ohara O."/>
            <person name="Isogai T."/>
            <person name="Sugano S."/>
        </authorList>
    </citation>
    <scope>NUCLEOTIDE SEQUENCE [LARGE SCALE MRNA]</scope>
</reference>
<reference key="4">
    <citation type="journal article" date="2004" name="Genome Res.">
        <title>The status, quality, and expansion of the NIH full-length cDNA project: the Mammalian Gene Collection (MGC).</title>
        <authorList>
            <consortium name="The MGC Project Team"/>
        </authorList>
    </citation>
    <scope>NUCLEOTIDE SEQUENCE [LARGE SCALE MRNA]</scope>
    <source>
        <tissue>Colon</tissue>
    </source>
</reference>
<reference key="5">
    <citation type="journal article" date="1985" name="Cell">
        <title>Expression of homologous homeo-box-containing genes in differentiated human teratocarcinoma cells and mouse embryos.</title>
        <authorList>
            <person name="Hauser C.A."/>
            <person name="Joyner A.L."/>
            <person name="Klein R.D."/>
            <person name="Learned T.K."/>
            <person name="Martin G.R."/>
            <person name="Tjian R."/>
        </authorList>
    </citation>
    <scope>NUCLEOTIDE SEQUENCE [GENOMIC DNA] OF 188-269</scope>
</reference>
<reference key="6">
    <citation type="journal article" date="1984" name="Cell">
        <title>Human DNA sequences homologous to a protein coding region conserved between homeotic genes of Drosophila.</title>
        <authorList>
            <person name="Levine M."/>
            <person name="Rubin G.M."/>
            <person name="Tjian R."/>
        </authorList>
    </citation>
    <scope>NUCLEOTIDE SEQUENCE [GENOMIC DNA] OF 191-269</scope>
</reference>
<reference key="7">
    <citation type="journal article" date="1986" name="Nature">
        <title>A human homoeo box gene specifically expressed in spinal cord during embryonic development.</title>
        <authorList>
            <person name="Simeone A."/>
            <person name="Mavilio F."/>
            <person name="Bottero L."/>
            <person name="Giampaolo A."/>
            <person name="Russo G."/>
            <person name="Faiella A."/>
            <person name="Boncinelli E."/>
            <person name="Peschle C."/>
        </authorList>
    </citation>
    <scope>NUCLEOTIDE SEQUENCE [MRNA] OF 200-269</scope>
</reference>
<reference key="8">
    <citation type="journal article" date="1989" name="Genome">
        <title>Organization of human class I homeobox genes.</title>
        <authorList>
            <person name="Boncinelli E."/>
            <person name="Acampora D."/>
            <person name="Pannese M."/>
            <person name="D'Esposito M."/>
            <person name="Somma R."/>
            <person name="Gaudino G."/>
            <person name="Stornaiuolo A."/>
            <person name="Cafiero M."/>
            <person name="Faiella A."/>
            <person name="Simeone A."/>
        </authorList>
    </citation>
    <scope>NUCLEOTIDE SEQUENCE [GENOMIC DNA] OF 199-269</scope>
</reference>
<reference key="9">
    <citation type="submission" date="1993-02" db="EMBL/GenBank/DDBJ databases">
        <title>Cloning of a homeobox-containing cDNA (HHO.c10 or Hu-1) from a gt11 cDNA library of human osteosarcoma cell MG-63.</title>
        <authorList>
            <person name="Waye M.M.Y."/>
        </authorList>
    </citation>
    <scope>NUCLEOTIDE SEQUENCE [MRNA] OF 217-269</scope>
    <source>
        <tissue>Osteosarcoma</tissue>
    </source>
</reference>
<organism>
    <name type="scientific">Homo sapiens</name>
    <name type="common">Human</name>
    <dbReference type="NCBI Taxonomy" id="9606"/>
    <lineage>
        <taxon>Eukaryota</taxon>
        <taxon>Metazoa</taxon>
        <taxon>Chordata</taxon>
        <taxon>Craniata</taxon>
        <taxon>Vertebrata</taxon>
        <taxon>Euteleostomi</taxon>
        <taxon>Mammalia</taxon>
        <taxon>Eutheria</taxon>
        <taxon>Euarchontoglires</taxon>
        <taxon>Primates</taxon>
        <taxon>Haplorrhini</taxon>
        <taxon>Catarrhini</taxon>
        <taxon>Hominidae</taxon>
        <taxon>Homo</taxon>
    </lineage>
</organism>
<dbReference type="EMBL" id="M92299">
    <property type="protein sequence ID" value="AAA52682.1"/>
    <property type="molecule type" value="mRNA"/>
</dbReference>
<dbReference type="EMBL" id="AF287967">
    <property type="protein sequence ID" value="AAG31553.1"/>
    <property type="molecule type" value="Genomic_DNA"/>
</dbReference>
<dbReference type="EMBL" id="AK314964">
    <property type="protein sequence ID" value="BAG37466.1"/>
    <property type="molecule type" value="mRNA"/>
</dbReference>
<dbReference type="EMBL" id="BC117247">
    <property type="protein sequence ID" value="AAI17248.1"/>
    <property type="molecule type" value="mRNA"/>
</dbReference>
<dbReference type="EMBL" id="X03794">
    <property type="protein sequence ID" value="CAA27420.1"/>
    <property type="molecule type" value="mRNA"/>
</dbReference>
<dbReference type="EMBL" id="K02572">
    <property type="protein sequence ID" value="AAA52681.1"/>
    <property type="status" value="ALT_INIT"/>
    <property type="molecule type" value="Genomic_DNA"/>
</dbReference>
<dbReference type="EMBL" id="M86726">
    <property type="protein sequence ID" value="AAB59430.1"/>
    <property type="molecule type" value="mRNA"/>
</dbReference>
<dbReference type="CCDS" id="CCDS11530.1"/>
<dbReference type="PIR" id="A24777">
    <property type="entry name" value="A24777"/>
</dbReference>
<dbReference type="PIR" id="A45578">
    <property type="entry name" value="A45578"/>
</dbReference>
<dbReference type="RefSeq" id="NP_002138.1">
    <property type="nucleotide sequence ID" value="NM_002147.4"/>
</dbReference>
<dbReference type="SMR" id="P09067"/>
<dbReference type="BioGRID" id="109455">
    <property type="interactions" value="110"/>
</dbReference>
<dbReference type="ELM" id="P09067"/>
<dbReference type="FunCoup" id="P09067">
    <property type="interactions" value="2336"/>
</dbReference>
<dbReference type="IntAct" id="P09067">
    <property type="interactions" value="93"/>
</dbReference>
<dbReference type="STRING" id="9606.ENSP00000239151"/>
<dbReference type="GlyGen" id="P09067">
    <property type="glycosylation" value="1 site, 1 O-linked glycan (1 site)"/>
</dbReference>
<dbReference type="iPTMnet" id="P09067"/>
<dbReference type="PhosphoSitePlus" id="P09067"/>
<dbReference type="BioMuta" id="HOXB5"/>
<dbReference type="DMDM" id="400000"/>
<dbReference type="jPOST" id="P09067"/>
<dbReference type="MassIVE" id="P09067"/>
<dbReference type="PaxDb" id="9606-ENSP00000239151"/>
<dbReference type="PeptideAtlas" id="P09067"/>
<dbReference type="ProteomicsDB" id="52191"/>
<dbReference type="ABCD" id="P09067">
    <property type="antibodies" value="2 sequenced antibodies"/>
</dbReference>
<dbReference type="Antibodypedia" id="17850">
    <property type="antibodies" value="235 antibodies from 30 providers"/>
</dbReference>
<dbReference type="DNASU" id="3215"/>
<dbReference type="Ensembl" id="ENST00000239151.6">
    <property type="protein sequence ID" value="ENSP00000239151.4"/>
    <property type="gene ID" value="ENSG00000120075.6"/>
</dbReference>
<dbReference type="GeneID" id="3215"/>
<dbReference type="KEGG" id="hsa:3215"/>
<dbReference type="MANE-Select" id="ENST00000239151.6">
    <property type="protein sequence ID" value="ENSP00000239151.4"/>
    <property type="RefSeq nucleotide sequence ID" value="NM_002147.4"/>
    <property type="RefSeq protein sequence ID" value="NP_002138.1"/>
</dbReference>
<dbReference type="UCSC" id="uc002inr.4">
    <property type="organism name" value="human"/>
</dbReference>
<dbReference type="AGR" id="HGNC:5116"/>
<dbReference type="CTD" id="3215"/>
<dbReference type="DisGeNET" id="3215"/>
<dbReference type="GeneCards" id="HOXB5"/>
<dbReference type="HGNC" id="HGNC:5116">
    <property type="gene designation" value="HOXB5"/>
</dbReference>
<dbReference type="HPA" id="ENSG00000120075">
    <property type="expression patterns" value="Tissue enhanced (epididymis, intestine, kidney)"/>
</dbReference>
<dbReference type="MIM" id="142960">
    <property type="type" value="gene"/>
</dbReference>
<dbReference type="neXtProt" id="NX_P09067"/>
<dbReference type="OpenTargets" id="ENSG00000120075"/>
<dbReference type="PharmGKB" id="PA29392"/>
<dbReference type="VEuPathDB" id="HostDB:ENSG00000120075"/>
<dbReference type="eggNOG" id="KOG0489">
    <property type="taxonomic scope" value="Eukaryota"/>
</dbReference>
<dbReference type="GeneTree" id="ENSGT00940000158354"/>
<dbReference type="HOGENOM" id="CLU_061398_2_1_1"/>
<dbReference type="InParanoid" id="P09067"/>
<dbReference type="OMA" id="TMHSGTY"/>
<dbReference type="OrthoDB" id="6159439at2759"/>
<dbReference type="PAN-GO" id="P09067">
    <property type="GO annotations" value="5 GO annotations based on evolutionary models"/>
</dbReference>
<dbReference type="PhylomeDB" id="P09067"/>
<dbReference type="TreeFam" id="TF316310"/>
<dbReference type="PathwayCommons" id="P09067"/>
<dbReference type="SignaLink" id="P09067"/>
<dbReference type="BioGRID-ORCS" id="3215">
    <property type="hits" value="19 hits in 1183 CRISPR screens"/>
</dbReference>
<dbReference type="ChiTaRS" id="HOXB5">
    <property type="organism name" value="human"/>
</dbReference>
<dbReference type="GeneWiki" id="HOXB5"/>
<dbReference type="GenomeRNAi" id="3215"/>
<dbReference type="Pharos" id="P09067">
    <property type="development level" value="Tbio"/>
</dbReference>
<dbReference type="PRO" id="PR:P09067"/>
<dbReference type="Proteomes" id="UP000005640">
    <property type="component" value="Chromosome 17"/>
</dbReference>
<dbReference type="RNAct" id="P09067">
    <property type="molecule type" value="protein"/>
</dbReference>
<dbReference type="Bgee" id="ENSG00000120075">
    <property type="expression patterns" value="Expressed in mucosa of transverse colon and 119 other cell types or tissues"/>
</dbReference>
<dbReference type="GO" id="GO:0000785">
    <property type="term" value="C:chromatin"/>
    <property type="evidence" value="ECO:0000247"/>
    <property type="project" value="NTNU_SB"/>
</dbReference>
<dbReference type="GO" id="GO:0005829">
    <property type="term" value="C:cytosol"/>
    <property type="evidence" value="ECO:0000314"/>
    <property type="project" value="HPA"/>
</dbReference>
<dbReference type="GO" id="GO:0001650">
    <property type="term" value="C:fibrillar center"/>
    <property type="evidence" value="ECO:0000314"/>
    <property type="project" value="HPA"/>
</dbReference>
<dbReference type="GO" id="GO:0005654">
    <property type="term" value="C:nucleoplasm"/>
    <property type="evidence" value="ECO:0000314"/>
    <property type="project" value="HPA"/>
</dbReference>
<dbReference type="GO" id="GO:0005634">
    <property type="term" value="C:nucleus"/>
    <property type="evidence" value="ECO:0000318"/>
    <property type="project" value="GO_Central"/>
</dbReference>
<dbReference type="GO" id="GO:0001228">
    <property type="term" value="F:DNA-binding transcription activator activity, RNA polymerase II-specific"/>
    <property type="evidence" value="ECO:0007669"/>
    <property type="project" value="Ensembl"/>
</dbReference>
<dbReference type="GO" id="GO:0000981">
    <property type="term" value="F:DNA-binding transcription factor activity, RNA polymerase II-specific"/>
    <property type="evidence" value="ECO:0000247"/>
    <property type="project" value="NTNU_SB"/>
</dbReference>
<dbReference type="GO" id="GO:0000978">
    <property type="term" value="F:RNA polymerase II cis-regulatory region sequence-specific DNA binding"/>
    <property type="evidence" value="ECO:0000318"/>
    <property type="project" value="GO_Central"/>
</dbReference>
<dbReference type="GO" id="GO:1990837">
    <property type="term" value="F:sequence-specific double-stranded DNA binding"/>
    <property type="evidence" value="ECO:0000314"/>
    <property type="project" value="ARUK-UCL"/>
</dbReference>
<dbReference type="GO" id="GO:0009653">
    <property type="term" value="P:anatomical structure morphogenesis"/>
    <property type="evidence" value="ECO:0000304"/>
    <property type="project" value="ProtInc"/>
</dbReference>
<dbReference type="GO" id="GO:0009952">
    <property type="term" value="P:anterior/posterior pattern specification"/>
    <property type="evidence" value="ECO:0000318"/>
    <property type="project" value="GO_Central"/>
</dbReference>
<dbReference type="GO" id="GO:0048704">
    <property type="term" value="P:embryonic skeletal system morphogenesis"/>
    <property type="evidence" value="ECO:0007669"/>
    <property type="project" value="Ensembl"/>
</dbReference>
<dbReference type="GO" id="GO:0045446">
    <property type="term" value="P:endothelial cell differentiation"/>
    <property type="evidence" value="ECO:0007669"/>
    <property type="project" value="Ensembl"/>
</dbReference>
<dbReference type="GO" id="GO:0006357">
    <property type="term" value="P:regulation of transcription by RNA polymerase II"/>
    <property type="evidence" value="ECO:0000318"/>
    <property type="project" value="GO_Central"/>
</dbReference>
<dbReference type="CDD" id="cd00086">
    <property type="entry name" value="homeodomain"/>
    <property type="match status" value="1"/>
</dbReference>
<dbReference type="FunFam" id="1.10.10.60:FF:000055">
    <property type="entry name" value="Homeobox protein Hox-A5"/>
    <property type="match status" value="1"/>
</dbReference>
<dbReference type="Gene3D" id="1.10.10.60">
    <property type="entry name" value="Homeodomain-like"/>
    <property type="match status" value="1"/>
</dbReference>
<dbReference type="InterPro" id="IPR050296">
    <property type="entry name" value="Antp_homeobox"/>
</dbReference>
<dbReference type="InterPro" id="IPR001356">
    <property type="entry name" value="HD"/>
</dbReference>
<dbReference type="InterPro" id="IPR020479">
    <property type="entry name" value="HD_metazoa"/>
</dbReference>
<dbReference type="InterPro" id="IPR017995">
    <property type="entry name" value="Homeobox_antennapedia"/>
</dbReference>
<dbReference type="InterPro" id="IPR001827">
    <property type="entry name" value="Homeobox_Antennapedia_CS"/>
</dbReference>
<dbReference type="InterPro" id="IPR017970">
    <property type="entry name" value="Homeobox_CS"/>
</dbReference>
<dbReference type="InterPro" id="IPR009057">
    <property type="entry name" value="Homeodomain-like_sf"/>
</dbReference>
<dbReference type="PANTHER" id="PTHR45659">
    <property type="entry name" value="HOMEOBOX PROTEIN HOX"/>
    <property type="match status" value="1"/>
</dbReference>
<dbReference type="PANTHER" id="PTHR45659:SF2">
    <property type="entry name" value="HOMEOBOX PROTEIN HOX-B5"/>
    <property type="match status" value="1"/>
</dbReference>
<dbReference type="Pfam" id="PF00046">
    <property type="entry name" value="Homeodomain"/>
    <property type="match status" value="1"/>
</dbReference>
<dbReference type="PRINTS" id="PR00025">
    <property type="entry name" value="ANTENNAPEDIA"/>
</dbReference>
<dbReference type="PRINTS" id="PR00024">
    <property type="entry name" value="HOMEOBOX"/>
</dbReference>
<dbReference type="SMART" id="SM00389">
    <property type="entry name" value="HOX"/>
    <property type="match status" value="1"/>
</dbReference>
<dbReference type="SUPFAM" id="SSF46689">
    <property type="entry name" value="Homeodomain-like"/>
    <property type="match status" value="1"/>
</dbReference>
<dbReference type="PROSITE" id="PS00032">
    <property type="entry name" value="ANTENNAPEDIA"/>
    <property type="match status" value="1"/>
</dbReference>
<dbReference type="PROSITE" id="PS00027">
    <property type="entry name" value="HOMEOBOX_1"/>
    <property type="match status" value="1"/>
</dbReference>
<dbReference type="PROSITE" id="PS50071">
    <property type="entry name" value="HOMEOBOX_2"/>
    <property type="match status" value="1"/>
</dbReference>
<evidence type="ECO:0000255" key="1">
    <source>
        <dbReference type="PROSITE-ProRule" id="PRU00108"/>
    </source>
</evidence>
<evidence type="ECO:0000256" key="2">
    <source>
        <dbReference type="SAM" id="MobiDB-lite"/>
    </source>
</evidence>
<evidence type="ECO:0000305" key="3"/>
<feature type="chain" id="PRO_0000200128" description="Homeobox protein Hox-B5">
    <location>
        <begin position="1"/>
        <end position="269"/>
    </location>
</feature>
<feature type="DNA-binding region" description="Homeobox" evidence="1">
    <location>
        <begin position="194"/>
        <end position="253"/>
    </location>
</feature>
<feature type="region of interest" description="Disordered" evidence="2">
    <location>
        <begin position="77"/>
        <end position="173"/>
    </location>
</feature>
<feature type="short sequence motif" description="Antp-type hexapeptide">
    <location>
        <begin position="176"/>
        <end position="181"/>
    </location>
</feature>
<feature type="compositionally biased region" description="Low complexity" evidence="2">
    <location>
        <begin position="88"/>
        <end position="102"/>
    </location>
</feature>
<feature type="compositionally biased region" description="Low complexity" evidence="2">
    <location>
        <begin position="113"/>
        <end position="128"/>
    </location>
</feature>
<feature type="compositionally biased region" description="Low complexity" evidence="2">
    <location>
        <begin position="136"/>
        <end position="158"/>
    </location>
</feature>
<feature type="compositionally biased region" description="Polar residues" evidence="2">
    <location>
        <begin position="163"/>
        <end position="173"/>
    </location>
</feature>